<name>THIKB_RAT</name>
<gene>
    <name evidence="10" type="primary">Acaa1b</name>
    <name type="synonym">Acaa1</name>
</gene>
<reference key="1">
    <citation type="journal article" date="1987" name="J. Biol. Chem.">
        <title>Structural analysis of cDNA for rat peroxisomal 3-ketoacyl-CoA thiolase.</title>
        <authorList>
            <person name="Hijikata M."/>
            <person name="Ishii N."/>
            <person name="Kagamiyama H."/>
            <person name="Osumi T."/>
            <person name="Hashimoto T."/>
        </authorList>
    </citation>
    <scope>NUCLEOTIDE SEQUENCE [MRNA]</scope>
</reference>
<reference key="2">
    <citation type="journal article" date="1990" name="J. Biol. Chem.">
        <title>Rat peroxisomal 3-ketoacyl-CoA thiolase gene. Occurrence of two closely related but differentially regulated genes.</title>
        <authorList>
            <person name="Hijikata M."/>
            <person name="Wen J.K."/>
            <person name="Osumi T."/>
            <person name="Hashimoto T."/>
        </authorList>
    </citation>
    <scope>NUCLEOTIDE SEQUENCE [GENOMIC DNA]</scope>
    <source>
        <strain>Sprague-Dawley</strain>
    </source>
</reference>
<reference key="3">
    <citation type="journal article" date="2004" name="Genome Res.">
        <title>The status, quality, and expansion of the NIH full-length cDNA project: the Mammalian Gene Collection (MGC).</title>
        <authorList>
            <consortium name="The MGC Project Team"/>
        </authorList>
    </citation>
    <scope>NUCLEOTIDE SEQUENCE [LARGE SCALE MRNA]</scope>
    <source>
        <tissue>Liver</tissue>
    </source>
</reference>
<reference key="4">
    <citation type="journal article" date="1987" name="Proc. Natl. Acad. Sci. U.S.A.">
        <title>Human peroxisomal 3-oxoacyl-coenzyme A thiolase deficiency.</title>
        <authorList>
            <person name="Schram A.W."/>
            <person name="Goldfischer S."/>
            <person name="van Roermund C.W."/>
            <person name="Brouwer-Kelder E.M."/>
            <person name="Collins J."/>
            <person name="Hashimoto T."/>
            <person name="Heymans H.S."/>
            <person name="van den Bosch H."/>
            <person name="Schutgens R.B."/>
            <person name="Tager J.M."/>
        </authorList>
    </citation>
    <scope>FUNCTION</scope>
    <scope>CATALYTIC ACTIVITY</scope>
    <scope>PATHWAY</scope>
</reference>
<reference key="5">
    <citation type="journal article" date="1991" name="EMBO J.">
        <title>A novel, cleavable peroxisomal targeting signal at the amino-terminus of the rat 3-ketoacyl-CoA thiolase.</title>
        <authorList>
            <person name="Swinkels B.W."/>
            <person name="Gould S.J."/>
            <person name="Bodnar A.G."/>
            <person name="Rachubinski R.A."/>
            <person name="Subramani S."/>
        </authorList>
    </citation>
    <scope>TRANSIT PEPTIDE CLEAVAGE SITE</scope>
    <scope>DOMAIN</scope>
</reference>
<reference key="6">
    <citation type="journal article" date="1999" name="Biochim. Biophys. Acta">
        <title>Comparison of the stability and substrate specificity of purified peroxisomal 3-oxoacyl-CoA thiolases A and B from rat liver.</title>
        <authorList>
            <person name="Antonenkov V.D."/>
            <person name="Van Veldhoven P.P."/>
            <person name="Waelkens E."/>
            <person name="Mannaerts G.P."/>
        </authorList>
    </citation>
    <scope>CATALYTIC ACTIVITY</scope>
    <scope>BIOPHYSICOCHEMICAL PROPERTIES</scope>
    <scope>PATHWAY</scope>
    <scope>SUBCELLULAR LOCATION</scope>
    <scope>FUNCTION</scope>
</reference>
<feature type="transit peptide" description="Peroxisome" evidence="6">
    <location>
        <begin position="1"/>
        <end position="26"/>
    </location>
</feature>
<feature type="chain" id="PRO_0000034071" description="3-ketoacyl-CoA thiolase B, peroxisomal">
    <location>
        <begin position="27"/>
        <end position="424"/>
    </location>
</feature>
<feature type="region of interest" description="PTS2-type peroxisomal targeting signal" evidence="6">
    <location>
        <begin position="1"/>
        <end position="26"/>
    </location>
</feature>
<feature type="active site" description="Acyl-thioester intermediate" evidence="2">
    <location>
        <position position="123"/>
    </location>
</feature>
<feature type="active site" description="Proton donor/acceptor" evidence="2">
    <location>
        <position position="408"/>
    </location>
</feature>
<feature type="binding site" evidence="2">
    <location>
        <position position="249"/>
    </location>
    <ligand>
        <name>CoA</name>
        <dbReference type="ChEBI" id="CHEBI:57287"/>
    </ligand>
</feature>
<feature type="binding site" evidence="2">
    <location>
        <position position="252"/>
    </location>
    <ligand>
        <name>CoA</name>
        <dbReference type="ChEBI" id="CHEBI:57287"/>
    </ligand>
</feature>
<feature type="binding site" evidence="2">
    <location>
        <position position="276"/>
    </location>
    <ligand>
        <name>CoA</name>
        <dbReference type="ChEBI" id="CHEBI:57287"/>
    </ligand>
</feature>
<feature type="site" description="Increases nucleophilicity of active site Cys" evidence="2">
    <location>
        <position position="377"/>
    </location>
</feature>
<feature type="modified residue" description="N6-acetyllysine" evidence="3">
    <location>
        <position position="173"/>
    </location>
</feature>
<feature type="modified residue" description="N6-acetyllysine" evidence="4">
    <location>
        <position position="234"/>
    </location>
</feature>
<feature type="sequence conflict" description="In Ref. 1; AAA41497." evidence="8" ref="1">
    <original>R</original>
    <variation>Q</variation>
    <location>
        <position position="44"/>
    </location>
</feature>
<feature type="sequence conflict" description="In Ref. 1; AAA41497." evidence="8" ref="1">
    <original>L</original>
    <variation>P</variation>
    <location>
        <position position="78"/>
    </location>
</feature>
<feature type="sequence conflict" description="In Ref. 2; BAA14107." evidence="8" ref="2">
    <original>L</original>
    <variation>V</variation>
    <location>
        <position position="359"/>
    </location>
</feature>
<evidence type="ECO:0000250" key="1">
    <source>
        <dbReference type="UniProtKB" id="P09110"/>
    </source>
</evidence>
<evidence type="ECO:0000250" key="2">
    <source>
        <dbReference type="UniProtKB" id="P42765"/>
    </source>
</evidence>
<evidence type="ECO:0000250" key="3">
    <source>
        <dbReference type="UniProtKB" id="Q8VCH0"/>
    </source>
</evidence>
<evidence type="ECO:0000250" key="4">
    <source>
        <dbReference type="UniProtKB" id="Q921H8"/>
    </source>
</evidence>
<evidence type="ECO:0000269" key="5">
    <source>
    </source>
</evidence>
<evidence type="ECO:0000269" key="6">
    <source>
    </source>
</evidence>
<evidence type="ECO:0000269" key="7">
    <source>
    </source>
</evidence>
<evidence type="ECO:0000305" key="8"/>
<evidence type="ECO:0000305" key="9">
    <source>
    </source>
</evidence>
<evidence type="ECO:0000312" key="10">
    <source>
        <dbReference type="RGD" id="1562373"/>
    </source>
</evidence>
<protein>
    <recommendedName>
        <fullName evidence="8">3-ketoacyl-CoA thiolase B, peroxisomal</fullName>
        <ecNumber evidence="5 7">2.3.1.155</ecNumber>
        <ecNumber evidence="5 7">2.3.1.16</ecNumber>
        <ecNumber evidence="5">2.3.1.9</ecNumber>
    </recommendedName>
    <alternativeName>
        <fullName>Acetyl-CoA acyltransferase B</fullName>
    </alternativeName>
    <alternativeName>
        <fullName>Beta-ketothiolase B</fullName>
    </alternativeName>
    <alternativeName>
        <fullName>Peroxisomal 3-oxoacyl-CoA thiolase B</fullName>
    </alternativeName>
</protein>
<proteinExistence type="evidence at protein level"/>
<accession>P07871</accession>
<accession>Q4G049</accession>
<dbReference type="EC" id="2.3.1.155" evidence="5 7"/>
<dbReference type="EC" id="2.3.1.16" evidence="5 7"/>
<dbReference type="EC" id="2.3.1.9" evidence="5"/>
<dbReference type="EMBL" id="J02749">
    <property type="protein sequence ID" value="AAA41497.1"/>
    <property type="molecule type" value="mRNA"/>
</dbReference>
<dbReference type="EMBL" id="D90063">
    <property type="protein sequence ID" value="BAA14107.1"/>
    <property type="molecule type" value="Genomic_DNA"/>
</dbReference>
<dbReference type="EMBL" id="BC098757">
    <property type="protein sequence ID" value="AAH98757.1"/>
    <property type="molecule type" value="mRNA"/>
</dbReference>
<dbReference type="PIR" id="B35725">
    <property type="entry name" value="XURTAB"/>
</dbReference>
<dbReference type="RefSeq" id="NP_001035108.2">
    <property type="nucleotide sequence ID" value="NM_001040019.3"/>
</dbReference>
<dbReference type="SMR" id="P07871"/>
<dbReference type="FunCoup" id="P07871">
    <property type="interactions" value="1461"/>
</dbReference>
<dbReference type="IntAct" id="P07871">
    <property type="interactions" value="1"/>
</dbReference>
<dbReference type="SwissLipids" id="SLP:000001213"/>
<dbReference type="iPTMnet" id="P07871"/>
<dbReference type="PhosphoSitePlus" id="P07871"/>
<dbReference type="jPOST" id="P07871"/>
<dbReference type="Ensembl" id="ENSRNOT00000106186.1">
    <property type="protein sequence ID" value="ENSRNOP00000086036.1"/>
    <property type="gene ID" value="ENSRNOG00000067803.1"/>
</dbReference>
<dbReference type="GeneID" id="501072"/>
<dbReference type="KEGG" id="rno:501072"/>
<dbReference type="UCSC" id="RGD:1562373">
    <property type="organism name" value="rat"/>
</dbReference>
<dbReference type="AGR" id="RGD:1562373"/>
<dbReference type="CTD" id="235674"/>
<dbReference type="RGD" id="1562373">
    <property type="gene designation" value="Acaa1b"/>
</dbReference>
<dbReference type="GeneTree" id="ENSGT01030000234626"/>
<dbReference type="InParanoid" id="P07871"/>
<dbReference type="OMA" id="QMGMDHL"/>
<dbReference type="OrthoDB" id="5404651at2759"/>
<dbReference type="PhylomeDB" id="P07871"/>
<dbReference type="Reactome" id="R-RNO-2046106">
    <property type="pathway name" value="alpha-linolenic acid (ALA) metabolism"/>
</dbReference>
<dbReference type="Reactome" id="R-RNO-390247">
    <property type="pathway name" value="Beta-oxidation of very long chain fatty acids"/>
</dbReference>
<dbReference type="Reactome" id="R-RNO-6798695">
    <property type="pathway name" value="Neutrophil degranulation"/>
</dbReference>
<dbReference type="Reactome" id="R-RNO-9033241">
    <property type="pathway name" value="Peroxisomal protein import"/>
</dbReference>
<dbReference type="SABIO-RK" id="P07871"/>
<dbReference type="UniPathway" id="UPA00661"/>
<dbReference type="PRO" id="PR:P07871"/>
<dbReference type="Proteomes" id="UP000002494">
    <property type="component" value="Chromosome 8"/>
</dbReference>
<dbReference type="GO" id="GO:0005777">
    <property type="term" value="C:peroxisome"/>
    <property type="evidence" value="ECO:0000314"/>
    <property type="project" value="UniProtKB"/>
</dbReference>
<dbReference type="GO" id="GO:0003985">
    <property type="term" value="F:acetyl-CoA C-acetyltransferase activity"/>
    <property type="evidence" value="ECO:0007669"/>
    <property type="project" value="UniProtKB-EC"/>
</dbReference>
<dbReference type="GO" id="GO:0003988">
    <property type="term" value="F:acetyl-CoA C-acyltransferase activity"/>
    <property type="evidence" value="ECO:0000318"/>
    <property type="project" value="GO_Central"/>
</dbReference>
<dbReference type="GO" id="GO:0050633">
    <property type="term" value="F:acetyl-CoA C-myristoyltransferase activity"/>
    <property type="evidence" value="ECO:0007669"/>
    <property type="project" value="UniProtKB-EC"/>
</dbReference>
<dbReference type="GO" id="GO:0006635">
    <property type="term" value="P:fatty acid beta-oxidation"/>
    <property type="evidence" value="ECO:0000318"/>
    <property type="project" value="GO_Central"/>
</dbReference>
<dbReference type="GO" id="GO:0033540">
    <property type="term" value="P:fatty acid beta-oxidation using acyl-CoA oxidase"/>
    <property type="evidence" value="ECO:0007669"/>
    <property type="project" value="UniProtKB-UniPathway"/>
</dbReference>
<dbReference type="GO" id="GO:0010124">
    <property type="term" value="P:phenylacetate catabolic process"/>
    <property type="evidence" value="ECO:0000318"/>
    <property type="project" value="GO_Central"/>
</dbReference>
<dbReference type="CDD" id="cd00751">
    <property type="entry name" value="thiolase"/>
    <property type="match status" value="1"/>
</dbReference>
<dbReference type="FunFam" id="3.40.47.10:FF:000035">
    <property type="entry name" value="3-ketoacyl-CoA thiolase A, peroxisomal"/>
    <property type="match status" value="1"/>
</dbReference>
<dbReference type="Gene3D" id="3.40.47.10">
    <property type="match status" value="1"/>
</dbReference>
<dbReference type="InterPro" id="IPR002155">
    <property type="entry name" value="Thiolase"/>
</dbReference>
<dbReference type="InterPro" id="IPR016039">
    <property type="entry name" value="Thiolase-like"/>
</dbReference>
<dbReference type="InterPro" id="IPR050215">
    <property type="entry name" value="Thiolase-like_sf_Thiolase"/>
</dbReference>
<dbReference type="InterPro" id="IPR020615">
    <property type="entry name" value="Thiolase_acyl_enz_int_AS"/>
</dbReference>
<dbReference type="InterPro" id="IPR020610">
    <property type="entry name" value="Thiolase_AS"/>
</dbReference>
<dbReference type="InterPro" id="IPR020617">
    <property type="entry name" value="Thiolase_C"/>
</dbReference>
<dbReference type="InterPro" id="IPR020613">
    <property type="entry name" value="Thiolase_CS"/>
</dbReference>
<dbReference type="InterPro" id="IPR020616">
    <property type="entry name" value="Thiolase_N"/>
</dbReference>
<dbReference type="NCBIfam" id="TIGR01930">
    <property type="entry name" value="AcCoA-C-Actrans"/>
    <property type="match status" value="1"/>
</dbReference>
<dbReference type="PANTHER" id="PTHR43853:SF17">
    <property type="entry name" value="3-KETOACYL-COA THIOLASE B, PEROXISOMAL"/>
    <property type="match status" value="1"/>
</dbReference>
<dbReference type="PANTHER" id="PTHR43853">
    <property type="entry name" value="3-KETOACYL-COA THIOLASE, PEROXISOMAL"/>
    <property type="match status" value="1"/>
</dbReference>
<dbReference type="Pfam" id="PF02803">
    <property type="entry name" value="Thiolase_C"/>
    <property type="match status" value="1"/>
</dbReference>
<dbReference type="Pfam" id="PF00108">
    <property type="entry name" value="Thiolase_N"/>
    <property type="match status" value="1"/>
</dbReference>
<dbReference type="PIRSF" id="PIRSF000429">
    <property type="entry name" value="Ac-CoA_Ac_transf"/>
    <property type="match status" value="1"/>
</dbReference>
<dbReference type="SUPFAM" id="SSF53901">
    <property type="entry name" value="Thiolase-like"/>
    <property type="match status" value="2"/>
</dbReference>
<dbReference type="PROSITE" id="PS00098">
    <property type="entry name" value="THIOLASE_1"/>
    <property type="match status" value="1"/>
</dbReference>
<dbReference type="PROSITE" id="PS00737">
    <property type="entry name" value="THIOLASE_2"/>
    <property type="match status" value="1"/>
</dbReference>
<dbReference type="PROSITE" id="PS00099">
    <property type="entry name" value="THIOLASE_3"/>
    <property type="match status" value="1"/>
</dbReference>
<comment type="function">
    <text evidence="5 7">Responsible for the thiolytic cleavage of straight chain 3-keto fatty acyl-CoAs (3-oxoacyl-CoAs) (PubMed:10064897, PubMed:2882519). Plays an important role in fatty acid peroxisomal beta-oxidation (PubMed:10064897, PubMed:2882519). Catalyzes the cleavage of short, medium, long, and very long straight chain 3-oxoacyl-CoAs (PubMed:10064897, PubMed:2882519). Medium chain straight 3-oxoacyl-CoAs are preferred substrates (PubMed:10064897).</text>
</comment>
<comment type="catalytic activity">
    <reaction evidence="5 7">
        <text>an acyl-CoA + acetyl-CoA = a 3-oxoacyl-CoA + CoA</text>
        <dbReference type="Rhea" id="RHEA:21564"/>
        <dbReference type="ChEBI" id="CHEBI:57287"/>
        <dbReference type="ChEBI" id="CHEBI:57288"/>
        <dbReference type="ChEBI" id="CHEBI:58342"/>
        <dbReference type="ChEBI" id="CHEBI:90726"/>
        <dbReference type="EC" id="2.3.1.16"/>
    </reaction>
    <physiologicalReaction direction="right-to-left" evidence="7 9">
        <dbReference type="Rhea" id="RHEA:21566"/>
    </physiologicalReaction>
</comment>
<comment type="catalytic activity">
    <reaction evidence="5">
        <text>2 acetyl-CoA = acetoacetyl-CoA + CoA</text>
        <dbReference type="Rhea" id="RHEA:21036"/>
        <dbReference type="ChEBI" id="CHEBI:57286"/>
        <dbReference type="ChEBI" id="CHEBI:57287"/>
        <dbReference type="ChEBI" id="CHEBI:57288"/>
        <dbReference type="EC" id="2.3.1.9"/>
    </reaction>
    <physiologicalReaction direction="right-to-left" evidence="9">
        <dbReference type="Rhea" id="RHEA:21038"/>
    </physiologicalReaction>
</comment>
<comment type="catalytic activity">
    <reaction evidence="5">
        <text>hexanoyl-CoA + acetyl-CoA = 3-oxooctanoyl-CoA + CoA</text>
        <dbReference type="Rhea" id="RHEA:31203"/>
        <dbReference type="ChEBI" id="CHEBI:57287"/>
        <dbReference type="ChEBI" id="CHEBI:57288"/>
        <dbReference type="ChEBI" id="CHEBI:62619"/>
        <dbReference type="ChEBI" id="CHEBI:62620"/>
    </reaction>
    <physiologicalReaction direction="right-to-left" evidence="9">
        <dbReference type="Rhea" id="RHEA:31205"/>
    </physiologicalReaction>
</comment>
<comment type="catalytic activity">
    <reaction evidence="5 7">
        <text>tetradecanoyl-CoA + acetyl-CoA = 3-oxohexadecanoyl-CoA + CoA</text>
        <dbReference type="Rhea" id="RHEA:18161"/>
        <dbReference type="ChEBI" id="CHEBI:57287"/>
        <dbReference type="ChEBI" id="CHEBI:57288"/>
        <dbReference type="ChEBI" id="CHEBI:57349"/>
        <dbReference type="ChEBI" id="CHEBI:57385"/>
        <dbReference type="EC" id="2.3.1.155"/>
    </reaction>
    <physiologicalReaction direction="right-to-left" evidence="7 9">
        <dbReference type="Rhea" id="RHEA:18163"/>
    </physiologicalReaction>
</comment>
<comment type="catalytic activity">
    <reaction evidence="5">
        <text>3-oxohexadecanedioyl-CoA + CoA = tetradecanedioyl-CoA + acetyl-CoA</text>
        <dbReference type="Rhea" id="RHEA:40343"/>
        <dbReference type="ChEBI" id="CHEBI:57287"/>
        <dbReference type="ChEBI" id="CHEBI:57288"/>
        <dbReference type="ChEBI" id="CHEBI:77081"/>
        <dbReference type="ChEBI" id="CHEBI:77084"/>
    </reaction>
    <physiologicalReaction direction="left-to-right" evidence="9">
        <dbReference type="Rhea" id="RHEA:40344"/>
    </physiologicalReaction>
</comment>
<comment type="catalytic activity">
    <reaction evidence="1">
        <text>3-oxo-(6Z,9Z,12Z,15Z,18Z,21Z)-tetracosahexaenoyl-CoA + CoA = (4Z,7Z,10Z,13Z,16Z,19Z)-docosahexaenoyl-CoA + acetyl-CoA</text>
        <dbReference type="Rhea" id="RHEA:39131"/>
        <dbReference type="ChEBI" id="CHEBI:57287"/>
        <dbReference type="ChEBI" id="CHEBI:57288"/>
        <dbReference type="ChEBI" id="CHEBI:74298"/>
        <dbReference type="ChEBI" id="CHEBI:74304"/>
    </reaction>
    <physiologicalReaction direction="left-to-right" evidence="1">
        <dbReference type="Rhea" id="RHEA:39132"/>
    </physiologicalReaction>
</comment>
<comment type="biophysicochemical properties">
    <kinetics>
        <KM evidence="5">7 uM for acetoacetyl-CoA</KM>
        <KM evidence="5">8.2 uM for 3-oxooctanoyl-CoA</KM>
        <KM evidence="5">6.7 uM for 3-oxohexadecanoyl-CoA</KM>
        <KM evidence="5">3.2 uM for 3-oxohexadecanedioyl-CoA</KM>
        <Vmax evidence="5">24.4 umol/min/mg enzyme for the degradation of acetoacetyl-CoA</Vmax>
        <Vmax evidence="5">141.8 umol/min/mg enzyme for the degradation of 3-oxooctanoyl-CoA</Vmax>
        <Vmax evidence="5">15.6 umol/min/mg enzyme for the degradation of 3-oxohexadecanoyl-CoA</Vmax>
        <Vmax evidence="5">120.3 umol/min/mg enzyme for the degradation of 3-oxohexadecanedioyl-CoA</Vmax>
    </kinetics>
</comment>
<comment type="pathway">
    <text evidence="5 7">Lipid metabolism; peroxisomal fatty acid beta-oxidation.</text>
</comment>
<comment type="subunit">
    <text evidence="1">Homodimer (By similarity). Interacts (via PTS2-type peroxisomal targeting signal region) with PEX7; leading to its translocation into peroxisomes (By similarity).</text>
</comment>
<comment type="subcellular location">
    <subcellularLocation>
        <location evidence="5">Peroxisome</location>
    </subcellularLocation>
    <text evidence="1">Transported into peroxisomes following association with PEX7.</text>
</comment>
<comment type="induction">
    <text>Peroxisomal thiolase is markedly induced (at the level of transcription) by various hypolipidemic compounds in parallel with the other two enzymes of the peroxisomal beta-oxidation system.</text>
</comment>
<comment type="domain">
    <text evidence="6">The PTS2-type peroxisomal targeting signal, which mediates interaction with PEX7 and localization to peroxisomes, is cleaved following import into peroxisomes.</text>
</comment>
<comment type="miscellaneous">
    <text>There exist at least 2 rat liver peroxisomal 3-ketoacyl-CoA thiolases.</text>
</comment>
<comment type="similarity">
    <text evidence="8">Belongs to the thiolase-like superfamily. Thiolase family.</text>
</comment>
<organism>
    <name type="scientific">Rattus norvegicus</name>
    <name type="common">Rat</name>
    <dbReference type="NCBI Taxonomy" id="10116"/>
    <lineage>
        <taxon>Eukaryota</taxon>
        <taxon>Metazoa</taxon>
        <taxon>Chordata</taxon>
        <taxon>Craniata</taxon>
        <taxon>Vertebrata</taxon>
        <taxon>Euteleostomi</taxon>
        <taxon>Mammalia</taxon>
        <taxon>Eutheria</taxon>
        <taxon>Euarchontoglires</taxon>
        <taxon>Glires</taxon>
        <taxon>Rodentia</taxon>
        <taxon>Myomorpha</taxon>
        <taxon>Muroidea</taxon>
        <taxon>Muridae</taxon>
        <taxon>Murinae</taxon>
        <taxon>Rattus</taxon>
    </lineage>
</organism>
<sequence length="424" mass="43820">MHRLQVVLGHLAGRSESSSALQAAPCSAGFPQASASDVVVVHGRRTPIGRAGRGGFKDTTPDELLSAVLTAVLQDVKLKPECLGDISVGNVLQPGAGAAMARIAQFLSGIPETVPLSAVNRQCSSGLQAVANIAGGIRNGSYDIGMACGVESMTLSERGNPGNISSRLLENEKARDCLIPMGITSENVAERFGISRQKQDAFALASQQKAASAQSKGCFRAEIVPVTTTVLDDKGDRKTITVSQDEGVRPSTTMEGLAKLKPAFKDGGSTTAGNSSQVSDGAAAVLLARRSKAEELGLPILGVLRSYAVVGVPPDIMGIGPAYAIPAALQKAGLTVNDIDIFEINEAFASQALYCVEKLGIPAEKVNPLGGAIALGHPLGCTGARQVVTLLNELKRRGRRAYGVVSMCIGTGMGAAAVFEYPGN</sequence>
<keyword id="KW-0007">Acetylation</keyword>
<keyword id="KW-0012">Acyltransferase</keyword>
<keyword id="KW-0276">Fatty acid metabolism</keyword>
<keyword id="KW-0443">Lipid metabolism</keyword>
<keyword id="KW-0576">Peroxisome</keyword>
<keyword id="KW-1185">Reference proteome</keyword>
<keyword id="KW-0808">Transferase</keyword>
<keyword id="KW-0809">Transit peptide</keyword>